<dbReference type="EMBL" id="CU928162">
    <property type="protein sequence ID" value="CAR08111.2"/>
    <property type="molecule type" value="Genomic_DNA"/>
</dbReference>
<dbReference type="RefSeq" id="WP_001124225.1">
    <property type="nucleotide sequence ID" value="NC_011745.1"/>
</dbReference>
<dbReference type="SMR" id="B7MVJ5"/>
<dbReference type="GeneID" id="97601348"/>
<dbReference type="KEGG" id="ecq:ECED1_1918"/>
<dbReference type="HOGENOM" id="CLU_169643_1_1_6"/>
<dbReference type="Proteomes" id="UP000000748">
    <property type="component" value="Chromosome"/>
</dbReference>
<dbReference type="GO" id="GO:0022625">
    <property type="term" value="C:cytosolic large ribosomal subunit"/>
    <property type="evidence" value="ECO:0007669"/>
    <property type="project" value="TreeGrafter"/>
</dbReference>
<dbReference type="GO" id="GO:0003735">
    <property type="term" value="F:structural constituent of ribosome"/>
    <property type="evidence" value="ECO:0007669"/>
    <property type="project" value="InterPro"/>
</dbReference>
<dbReference type="GO" id="GO:0006412">
    <property type="term" value="P:translation"/>
    <property type="evidence" value="ECO:0007669"/>
    <property type="project" value="UniProtKB-UniRule"/>
</dbReference>
<dbReference type="FunFam" id="4.10.410.60:FF:000001">
    <property type="entry name" value="50S ribosomal protein L35"/>
    <property type="match status" value="1"/>
</dbReference>
<dbReference type="Gene3D" id="4.10.410.60">
    <property type="match status" value="1"/>
</dbReference>
<dbReference type="HAMAP" id="MF_00514">
    <property type="entry name" value="Ribosomal_bL35"/>
    <property type="match status" value="1"/>
</dbReference>
<dbReference type="InterPro" id="IPR001706">
    <property type="entry name" value="Ribosomal_bL35"/>
</dbReference>
<dbReference type="InterPro" id="IPR021137">
    <property type="entry name" value="Ribosomal_bL35-like"/>
</dbReference>
<dbReference type="InterPro" id="IPR018265">
    <property type="entry name" value="Ribosomal_bL35_CS"/>
</dbReference>
<dbReference type="InterPro" id="IPR037229">
    <property type="entry name" value="Ribosomal_bL35_sf"/>
</dbReference>
<dbReference type="NCBIfam" id="TIGR00001">
    <property type="entry name" value="rpmI_bact"/>
    <property type="match status" value="1"/>
</dbReference>
<dbReference type="PANTHER" id="PTHR33343">
    <property type="entry name" value="54S RIBOSOMAL PROTEIN BL35M"/>
    <property type="match status" value="1"/>
</dbReference>
<dbReference type="PANTHER" id="PTHR33343:SF1">
    <property type="entry name" value="LARGE RIBOSOMAL SUBUNIT PROTEIN BL35M"/>
    <property type="match status" value="1"/>
</dbReference>
<dbReference type="Pfam" id="PF01632">
    <property type="entry name" value="Ribosomal_L35p"/>
    <property type="match status" value="1"/>
</dbReference>
<dbReference type="PRINTS" id="PR00064">
    <property type="entry name" value="RIBOSOMALL35"/>
</dbReference>
<dbReference type="SUPFAM" id="SSF143034">
    <property type="entry name" value="L35p-like"/>
    <property type="match status" value="1"/>
</dbReference>
<dbReference type="PROSITE" id="PS00936">
    <property type="entry name" value="RIBOSOMAL_L35"/>
    <property type="match status" value="1"/>
</dbReference>
<evidence type="ECO:0000255" key="1">
    <source>
        <dbReference type="HAMAP-Rule" id="MF_00514"/>
    </source>
</evidence>
<evidence type="ECO:0000256" key="2">
    <source>
        <dbReference type="SAM" id="MobiDB-lite"/>
    </source>
</evidence>
<evidence type="ECO:0000305" key="3"/>
<sequence>MPKIKTVRGAAKRFKKTGKGGFKHKHANLRHILTKKATKRKRHLRPKAMVSKGDLGLVIACLPYA</sequence>
<reference key="1">
    <citation type="journal article" date="2009" name="PLoS Genet.">
        <title>Organised genome dynamics in the Escherichia coli species results in highly diverse adaptive paths.</title>
        <authorList>
            <person name="Touchon M."/>
            <person name="Hoede C."/>
            <person name="Tenaillon O."/>
            <person name="Barbe V."/>
            <person name="Baeriswyl S."/>
            <person name="Bidet P."/>
            <person name="Bingen E."/>
            <person name="Bonacorsi S."/>
            <person name="Bouchier C."/>
            <person name="Bouvet O."/>
            <person name="Calteau A."/>
            <person name="Chiapello H."/>
            <person name="Clermont O."/>
            <person name="Cruveiller S."/>
            <person name="Danchin A."/>
            <person name="Diard M."/>
            <person name="Dossat C."/>
            <person name="Karoui M.E."/>
            <person name="Frapy E."/>
            <person name="Garry L."/>
            <person name="Ghigo J.M."/>
            <person name="Gilles A.M."/>
            <person name="Johnson J."/>
            <person name="Le Bouguenec C."/>
            <person name="Lescat M."/>
            <person name="Mangenot S."/>
            <person name="Martinez-Jehanne V."/>
            <person name="Matic I."/>
            <person name="Nassif X."/>
            <person name="Oztas S."/>
            <person name="Petit M.A."/>
            <person name="Pichon C."/>
            <person name="Rouy Z."/>
            <person name="Ruf C.S."/>
            <person name="Schneider D."/>
            <person name="Tourret J."/>
            <person name="Vacherie B."/>
            <person name="Vallenet D."/>
            <person name="Medigue C."/>
            <person name="Rocha E.P.C."/>
            <person name="Denamur E."/>
        </authorList>
    </citation>
    <scope>NUCLEOTIDE SEQUENCE [LARGE SCALE GENOMIC DNA]</scope>
    <source>
        <strain>ED1a</strain>
    </source>
</reference>
<organism>
    <name type="scientific">Escherichia coli O81 (strain ED1a)</name>
    <dbReference type="NCBI Taxonomy" id="585397"/>
    <lineage>
        <taxon>Bacteria</taxon>
        <taxon>Pseudomonadati</taxon>
        <taxon>Pseudomonadota</taxon>
        <taxon>Gammaproteobacteria</taxon>
        <taxon>Enterobacterales</taxon>
        <taxon>Enterobacteriaceae</taxon>
        <taxon>Escherichia</taxon>
    </lineage>
</organism>
<feature type="chain" id="PRO_1000194074" description="Large ribosomal subunit protein bL35">
    <location>
        <begin position="1"/>
        <end position="65"/>
    </location>
</feature>
<feature type="region of interest" description="Disordered" evidence="2">
    <location>
        <begin position="1"/>
        <end position="22"/>
    </location>
</feature>
<feature type="compositionally biased region" description="Basic residues" evidence="2">
    <location>
        <begin position="10"/>
        <end position="22"/>
    </location>
</feature>
<name>RL35_ECO81</name>
<protein>
    <recommendedName>
        <fullName evidence="1">Large ribosomal subunit protein bL35</fullName>
    </recommendedName>
    <alternativeName>
        <fullName evidence="3">50S ribosomal protein L35</fullName>
    </alternativeName>
</protein>
<comment type="similarity">
    <text evidence="1">Belongs to the bacterial ribosomal protein bL35 family.</text>
</comment>
<accession>B7MVJ5</accession>
<proteinExistence type="inferred from homology"/>
<keyword id="KW-0687">Ribonucleoprotein</keyword>
<keyword id="KW-0689">Ribosomal protein</keyword>
<gene>
    <name evidence="1" type="primary">rpmI</name>
    <name type="ordered locus">ECED1_1918</name>
</gene>